<gene>
    <name type="primary">Dkk3</name>
</gene>
<reference key="1">
    <citation type="journal article" date="1999" name="Mech. Dev.">
        <title>Dickkopf genes are co-ordinately expressed in mesodermal lineages.</title>
        <authorList>
            <person name="Monaghan P.A."/>
            <person name="Kioschis P."/>
            <person name="Wu W."/>
            <person name="Zuniga A."/>
            <person name="Bock D."/>
            <person name="Poustka A."/>
            <person name="Delius H."/>
            <person name="Niehrs C."/>
        </authorList>
    </citation>
    <scope>NUCLEOTIDE SEQUENCE [MRNA]</scope>
</reference>
<reference key="2">
    <citation type="journal article" date="1999" name="Gene">
        <title>Functional and structural diversity of the human Dickkopf gene family.</title>
        <authorList>
            <person name="Krupnik V.E."/>
            <person name="Sharp J.D."/>
            <person name="Jiang C."/>
            <person name="Robison K."/>
            <person name="Chickering T.W."/>
            <person name="Amaravadi L."/>
            <person name="Brown D.E."/>
            <person name="Guyot D."/>
            <person name="Mays G."/>
            <person name="Leiby K."/>
            <person name="Chang B."/>
            <person name="Duong T."/>
            <person name="Goodearl A.D.J."/>
            <person name="Gearing D.P."/>
            <person name="Sokol S.Y."/>
            <person name="McCarthy S.A."/>
        </authorList>
    </citation>
    <scope>NUCLEOTIDE SEQUENCE [MRNA]</scope>
</reference>
<reference key="3">
    <citation type="journal article" date="2005" name="Science">
        <title>The transcriptional landscape of the mammalian genome.</title>
        <authorList>
            <person name="Carninci P."/>
            <person name="Kasukawa T."/>
            <person name="Katayama S."/>
            <person name="Gough J."/>
            <person name="Frith M.C."/>
            <person name="Maeda N."/>
            <person name="Oyama R."/>
            <person name="Ravasi T."/>
            <person name="Lenhard B."/>
            <person name="Wells C."/>
            <person name="Kodzius R."/>
            <person name="Shimokawa K."/>
            <person name="Bajic V.B."/>
            <person name="Brenner S.E."/>
            <person name="Batalov S."/>
            <person name="Forrest A.R."/>
            <person name="Zavolan M."/>
            <person name="Davis M.J."/>
            <person name="Wilming L.G."/>
            <person name="Aidinis V."/>
            <person name="Allen J.E."/>
            <person name="Ambesi-Impiombato A."/>
            <person name="Apweiler R."/>
            <person name="Aturaliya R.N."/>
            <person name="Bailey T.L."/>
            <person name="Bansal M."/>
            <person name="Baxter L."/>
            <person name="Beisel K.W."/>
            <person name="Bersano T."/>
            <person name="Bono H."/>
            <person name="Chalk A.M."/>
            <person name="Chiu K.P."/>
            <person name="Choudhary V."/>
            <person name="Christoffels A."/>
            <person name="Clutterbuck D.R."/>
            <person name="Crowe M.L."/>
            <person name="Dalla E."/>
            <person name="Dalrymple B.P."/>
            <person name="de Bono B."/>
            <person name="Della Gatta G."/>
            <person name="di Bernardo D."/>
            <person name="Down T."/>
            <person name="Engstrom P."/>
            <person name="Fagiolini M."/>
            <person name="Faulkner G."/>
            <person name="Fletcher C.F."/>
            <person name="Fukushima T."/>
            <person name="Furuno M."/>
            <person name="Futaki S."/>
            <person name="Gariboldi M."/>
            <person name="Georgii-Hemming P."/>
            <person name="Gingeras T.R."/>
            <person name="Gojobori T."/>
            <person name="Green R.E."/>
            <person name="Gustincich S."/>
            <person name="Harbers M."/>
            <person name="Hayashi Y."/>
            <person name="Hensch T.K."/>
            <person name="Hirokawa N."/>
            <person name="Hill D."/>
            <person name="Huminiecki L."/>
            <person name="Iacono M."/>
            <person name="Ikeo K."/>
            <person name="Iwama A."/>
            <person name="Ishikawa T."/>
            <person name="Jakt M."/>
            <person name="Kanapin A."/>
            <person name="Katoh M."/>
            <person name="Kawasawa Y."/>
            <person name="Kelso J."/>
            <person name="Kitamura H."/>
            <person name="Kitano H."/>
            <person name="Kollias G."/>
            <person name="Krishnan S.P."/>
            <person name="Kruger A."/>
            <person name="Kummerfeld S.K."/>
            <person name="Kurochkin I.V."/>
            <person name="Lareau L.F."/>
            <person name="Lazarevic D."/>
            <person name="Lipovich L."/>
            <person name="Liu J."/>
            <person name="Liuni S."/>
            <person name="McWilliam S."/>
            <person name="Madan Babu M."/>
            <person name="Madera M."/>
            <person name="Marchionni L."/>
            <person name="Matsuda H."/>
            <person name="Matsuzawa S."/>
            <person name="Miki H."/>
            <person name="Mignone F."/>
            <person name="Miyake S."/>
            <person name="Morris K."/>
            <person name="Mottagui-Tabar S."/>
            <person name="Mulder N."/>
            <person name="Nakano N."/>
            <person name="Nakauchi H."/>
            <person name="Ng P."/>
            <person name="Nilsson R."/>
            <person name="Nishiguchi S."/>
            <person name="Nishikawa S."/>
            <person name="Nori F."/>
            <person name="Ohara O."/>
            <person name="Okazaki Y."/>
            <person name="Orlando V."/>
            <person name="Pang K.C."/>
            <person name="Pavan W.J."/>
            <person name="Pavesi G."/>
            <person name="Pesole G."/>
            <person name="Petrovsky N."/>
            <person name="Piazza S."/>
            <person name="Reed J."/>
            <person name="Reid J.F."/>
            <person name="Ring B.Z."/>
            <person name="Ringwald M."/>
            <person name="Rost B."/>
            <person name="Ruan Y."/>
            <person name="Salzberg S.L."/>
            <person name="Sandelin A."/>
            <person name="Schneider C."/>
            <person name="Schoenbach C."/>
            <person name="Sekiguchi K."/>
            <person name="Semple C.A."/>
            <person name="Seno S."/>
            <person name="Sessa L."/>
            <person name="Sheng Y."/>
            <person name="Shibata Y."/>
            <person name="Shimada H."/>
            <person name="Shimada K."/>
            <person name="Silva D."/>
            <person name="Sinclair B."/>
            <person name="Sperling S."/>
            <person name="Stupka E."/>
            <person name="Sugiura K."/>
            <person name="Sultana R."/>
            <person name="Takenaka Y."/>
            <person name="Taki K."/>
            <person name="Tammoja K."/>
            <person name="Tan S.L."/>
            <person name="Tang S."/>
            <person name="Taylor M.S."/>
            <person name="Tegner J."/>
            <person name="Teichmann S.A."/>
            <person name="Ueda H.R."/>
            <person name="van Nimwegen E."/>
            <person name="Verardo R."/>
            <person name="Wei C.L."/>
            <person name="Yagi K."/>
            <person name="Yamanishi H."/>
            <person name="Zabarovsky E."/>
            <person name="Zhu S."/>
            <person name="Zimmer A."/>
            <person name="Hide W."/>
            <person name="Bult C."/>
            <person name="Grimmond S.M."/>
            <person name="Teasdale R.D."/>
            <person name="Liu E.T."/>
            <person name="Brusic V."/>
            <person name="Quackenbush J."/>
            <person name="Wahlestedt C."/>
            <person name="Mattick J.S."/>
            <person name="Hume D.A."/>
            <person name="Kai C."/>
            <person name="Sasaki D."/>
            <person name="Tomaru Y."/>
            <person name="Fukuda S."/>
            <person name="Kanamori-Katayama M."/>
            <person name="Suzuki M."/>
            <person name="Aoki J."/>
            <person name="Arakawa T."/>
            <person name="Iida J."/>
            <person name="Imamura K."/>
            <person name="Itoh M."/>
            <person name="Kato T."/>
            <person name="Kawaji H."/>
            <person name="Kawagashira N."/>
            <person name="Kawashima T."/>
            <person name="Kojima M."/>
            <person name="Kondo S."/>
            <person name="Konno H."/>
            <person name="Nakano K."/>
            <person name="Ninomiya N."/>
            <person name="Nishio T."/>
            <person name="Okada M."/>
            <person name="Plessy C."/>
            <person name="Shibata K."/>
            <person name="Shiraki T."/>
            <person name="Suzuki S."/>
            <person name="Tagami M."/>
            <person name="Waki K."/>
            <person name="Watahiki A."/>
            <person name="Okamura-Oho Y."/>
            <person name="Suzuki H."/>
            <person name="Kawai J."/>
            <person name="Hayashizaki Y."/>
        </authorList>
    </citation>
    <scope>NUCLEOTIDE SEQUENCE [LARGE SCALE MRNA]</scope>
    <source>
        <strain>C57BL/6J</strain>
        <tissue>Liver</tissue>
    </source>
</reference>
<reference key="4">
    <citation type="journal article" date="2004" name="Genome Res.">
        <title>The status, quality, and expansion of the NIH full-length cDNA project: the Mammalian Gene Collection (MGC).</title>
        <authorList>
            <consortium name="The MGC Project Team"/>
        </authorList>
    </citation>
    <scope>NUCLEOTIDE SEQUENCE [LARGE SCALE MRNA]</scope>
    <source>
        <strain>C57BL/6J</strain>
        <tissue>Brain</tissue>
        <tissue>Retina</tissue>
    </source>
</reference>
<reference key="5">
    <citation type="journal article" date="2006" name="Oncogene">
        <title>Function and biological roles of the Dickkopf family of Wnt modulators.</title>
        <authorList>
            <person name="Niehrs C."/>
        </authorList>
    </citation>
    <scope>REVIEW OF THE DKK FAMILY</scope>
</reference>
<reference key="6">
    <citation type="journal article" date="2016" name="Sci. Rep.">
        <title>Kremen1 regulates mechanosensory hair cell development in the mammalian cochlea and the zebrafish lateral line.</title>
        <authorList>
            <person name="Mulvaney J.F."/>
            <person name="Thompkins C."/>
            <person name="Noda T."/>
            <person name="Nishimura K."/>
            <person name="Sun W.W."/>
            <person name="Lin S.Y."/>
            <person name="Coffin A."/>
            <person name="Dabdoub A."/>
        </authorList>
    </citation>
    <scope>DEVELOPMENTAL STAGE</scope>
</reference>
<name>DKK3_MOUSE</name>
<dbReference type="EMBL" id="AJ243964">
    <property type="protein sequence ID" value="CAB60111.1"/>
    <property type="molecule type" value="mRNA"/>
</dbReference>
<dbReference type="EMBL" id="AF177400">
    <property type="protein sequence ID" value="AAF02680.1"/>
    <property type="molecule type" value="mRNA"/>
</dbReference>
<dbReference type="EMBL" id="AK004853">
    <property type="protein sequence ID" value="BAB23617.1"/>
    <property type="molecule type" value="mRNA"/>
</dbReference>
<dbReference type="EMBL" id="BC046304">
    <property type="protein sequence ID" value="AAH46304.1"/>
    <property type="molecule type" value="mRNA"/>
</dbReference>
<dbReference type="EMBL" id="BC050934">
    <property type="protein sequence ID" value="AAH50934.1"/>
    <property type="molecule type" value="mRNA"/>
</dbReference>
<dbReference type="CCDS" id="CCDS21752.1"/>
<dbReference type="RefSeq" id="NP_001347189.1">
    <property type="nucleotide sequence ID" value="NM_001360260.1"/>
</dbReference>
<dbReference type="RefSeq" id="NP_056629.1">
    <property type="nucleotide sequence ID" value="NM_015814.3"/>
</dbReference>
<dbReference type="RefSeq" id="XP_006508076.1">
    <property type="nucleotide sequence ID" value="XM_006508013.1"/>
</dbReference>
<dbReference type="FunCoup" id="Q9QUN9">
    <property type="interactions" value="598"/>
</dbReference>
<dbReference type="IntAct" id="Q9QUN9">
    <property type="interactions" value="1"/>
</dbReference>
<dbReference type="STRING" id="10090.ENSMUSP00000033036"/>
<dbReference type="GlyConnect" id="2254">
    <property type="glycosylation" value="3 N-Linked glycans (2 sites)"/>
</dbReference>
<dbReference type="GlyCosmos" id="Q9QUN9">
    <property type="glycosylation" value="4 sites, 3 glycans"/>
</dbReference>
<dbReference type="GlyGen" id="Q9QUN9">
    <property type="glycosylation" value="5 sites, 7 N-linked glycans (4 sites)"/>
</dbReference>
<dbReference type="iPTMnet" id="Q9QUN9"/>
<dbReference type="PhosphoSitePlus" id="Q9QUN9"/>
<dbReference type="jPOST" id="Q9QUN9"/>
<dbReference type="PaxDb" id="10090-ENSMUSP00000033036"/>
<dbReference type="PeptideAtlas" id="Q9QUN9"/>
<dbReference type="ProteomicsDB" id="279779"/>
<dbReference type="Antibodypedia" id="2166">
    <property type="antibodies" value="621 antibodies from 40 providers"/>
</dbReference>
<dbReference type="DNASU" id="50781"/>
<dbReference type="Ensembl" id="ENSMUST00000033036.7">
    <property type="protein sequence ID" value="ENSMUSP00000033036.6"/>
    <property type="gene ID" value="ENSMUSG00000030772.7"/>
</dbReference>
<dbReference type="GeneID" id="50781"/>
<dbReference type="KEGG" id="mmu:50781"/>
<dbReference type="UCSC" id="uc009jgi.1">
    <property type="organism name" value="mouse"/>
</dbReference>
<dbReference type="AGR" id="MGI:1354952"/>
<dbReference type="CTD" id="27122"/>
<dbReference type="MGI" id="MGI:1354952">
    <property type="gene designation" value="Dkk3"/>
</dbReference>
<dbReference type="VEuPathDB" id="HostDB:ENSMUSG00000030772"/>
<dbReference type="eggNOG" id="KOG1218">
    <property type="taxonomic scope" value="Eukaryota"/>
</dbReference>
<dbReference type="GeneTree" id="ENSGT00390000000221"/>
<dbReference type="HOGENOM" id="CLU_055300_0_0_1"/>
<dbReference type="InParanoid" id="Q9QUN9"/>
<dbReference type="OMA" id="HCQPHGR"/>
<dbReference type="OrthoDB" id="6359792at2759"/>
<dbReference type="PhylomeDB" id="Q9QUN9"/>
<dbReference type="TreeFam" id="TF337340"/>
<dbReference type="BioGRID-ORCS" id="50781">
    <property type="hits" value="4 hits in 75 CRISPR screens"/>
</dbReference>
<dbReference type="ChiTaRS" id="Dkk3">
    <property type="organism name" value="mouse"/>
</dbReference>
<dbReference type="PRO" id="PR:Q9QUN9"/>
<dbReference type="Proteomes" id="UP000000589">
    <property type="component" value="Chromosome 7"/>
</dbReference>
<dbReference type="RNAct" id="Q9QUN9">
    <property type="molecule type" value="protein"/>
</dbReference>
<dbReference type="Bgee" id="ENSMUSG00000030772">
    <property type="expression patterns" value="Expressed in epithelium of lens and 309 other cell types or tissues"/>
</dbReference>
<dbReference type="GO" id="GO:0005576">
    <property type="term" value="C:extracellular region"/>
    <property type="evidence" value="ECO:0000250"/>
    <property type="project" value="MGI"/>
</dbReference>
<dbReference type="GO" id="GO:0005615">
    <property type="term" value="C:extracellular space"/>
    <property type="evidence" value="ECO:0007005"/>
    <property type="project" value="BHF-UCL"/>
</dbReference>
<dbReference type="GO" id="GO:0030325">
    <property type="term" value="P:adrenal gland development"/>
    <property type="evidence" value="ECO:0007669"/>
    <property type="project" value="Ensembl"/>
</dbReference>
<dbReference type="GO" id="GO:0032348">
    <property type="term" value="P:negative regulation of aldosterone biosynthetic process"/>
    <property type="evidence" value="ECO:0007669"/>
    <property type="project" value="Ensembl"/>
</dbReference>
<dbReference type="GO" id="GO:0090090">
    <property type="term" value="P:negative regulation of canonical Wnt signaling pathway"/>
    <property type="evidence" value="ECO:0007669"/>
    <property type="project" value="Ensembl"/>
</dbReference>
<dbReference type="GO" id="GO:2000065">
    <property type="term" value="P:negative regulation of cortisol biosynthetic process"/>
    <property type="evidence" value="ECO:0007669"/>
    <property type="project" value="Ensembl"/>
</dbReference>
<dbReference type="GO" id="GO:0045892">
    <property type="term" value="P:negative regulation of DNA-templated transcription"/>
    <property type="evidence" value="ECO:0007669"/>
    <property type="project" value="Ensembl"/>
</dbReference>
<dbReference type="GO" id="GO:0016055">
    <property type="term" value="P:Wnt signaling pathway"/>
    <property type="evidence" value="ECO:0007669"/>
    <property type="project" value="UniProtKB-KW"/>
</dbReference>
<dbReference type="CDD" id="cd23274">
    <property type="entry name" value="Dkk3_Cys2"/>
    <property type="match status" value="1"/>
</dbReference>
<dbReference type="CDD" id="cd23014">
    <property type="entry name" value="Dkk3_N_Cys1"/>
    <property type="match status" value="1"/>
</dbReference>
<dbReference type="FunFam" id="2.10.80.10:FF:000003">
    <property type="entry name" value="Dickkopf WNT-signaling pathway inhibitor 3"/>
    <property type="match status" value="1"/>
</dbReference>
<dbReference type="Gene3D" id="2.10.80.10">
    <property type="entry name" value="Lipase, subunit A"/>
    <property type="match status" value="1"/>
</dbReference>
<dbReference type="InterPro" id="IPR006796">
    <property type="entry name" value="Dickkopf_N"/>
</dbReference>
<dbReference type="InterPro" id="IPR039863">
    <property type="entry name" value="DKK1-4"/>
</dbReference>
<dbReference type="InterPro" id="IPR047300">
    <property type="entry name" value="Dkk3_Cys2"/>
</dbReference>
<dbReference type="InterPro" id="IPR047301">
    <property type="entry name" value="Dkk3_N"/>
</dbReference>
<dbReference type="PANTHER" id="PTHR12113:SF8">
    <property type="entry name" value="DICKKOPF-RELATED PROTEIN 3"/>
    <property type="match status" value="1"/>
</dbReference>
<dbReference type="PANTHER" id="PTHR12113">
    <property type="entry name" value="DICKKOPF3-LIKE 3"/>
    <property type="match status" value="1"/>
</dbReference>
<dbReference type="Pfam" id="PF04706">
    <property type="entry name" value="Dickkopf_N"/>
    <property type="match status" value="1"/>
</dbReference>
<keyword id="KW-0175">Coiled coil</keyword>
<keyword id="KW-0217">Developmental protein</keyword>
<keyword id="KW-1015">Disulfide bond</keyword>
<keyword id="KW-0325">Glycoprotein</keyword>
<keyword id="KW-1185">Reference proteome</keyword>
<keyword id="KW-0964">Secreted</keyword>
<keyword id="KW-0732">Signal</keyword>
<keyword id="KW-0879">Wnt signaling pathway</keyword>
<comment type="function">
    <text evidence="1">Antagonizes canonical Wnt signaling by inhibiting LRP5/6 interaction with Wnt and by forming a ternary complex with the transmembrane protein KREMEN that promotes internalization of LRP5/6. DKKs play an important role in vertebrate development, where they locally inhibit Wnt regulated processes such as antero-posterior axial patterning, limb development, somitogenesis and eye formation. In the adult, Dkks are implicated in bone formation and bone disease, cancer and Alzheimer disease (By similarity).</text>
</comment>
<comment type="subunit">
    <text evidence="1">Interacts with LRP5 and LRP6.</text>
</comment>
<comment type="subcellular location">
    <subcellularLocation>
        <location>Secreted</location>
    </subcellularLocation>
</comment>
<comment type="tissue specificity">
    <text>Highest expression in brain, eye and heart.</text>
</comment>
<comment type="developmental stage">
    <text evidence="3">Expressed in the developing cochlea.</text>
</comment>
<comment type="domain">
    <text evidence="1">The C-terminal cysteine-rich domain mediates interaction with LRP5 and LRP6.</text>
</comment>
<comment type="similarity">
    <text evidence="4">Belongs to the dickkopf family.</text>
</comment>
<organism>
    <name type="scientific">Mus musculus</name>
    <name type="common">Mouse</name>
    <dbReference type="NCBI Taxonomy" id="10090"/>
    <lineage>
        <taxon>Eukaryota</taxon>
        <taxon>Metazoa</taxon>
        <taxon>Chordata</taxon>
        <taxon>Craniata</taxon>
        <taxon>Vertebrata</taxon>
        <taxon>Euteleostomi</taxon>
        <taxon>Mammalia</taxon>
        <taxon>Eutheria</taxon>
        <taxon>Euarchontoglires</taxon>
        <taxon>Glires</taxon>
        <taxon>Rodentia</taxon>
        <taxon>Myomorpha</taxon>
        <taxon>Muroidea</taxon>
        <taxon>Muridae</taxon>
        <taxon>Murinae</taxon>
        <taxon>Mus</taxon>
        <taxon>Mus</taxon>
    </lineage>
</organism>
<feature type="signal peptide" evidence="1">
    <location>
        <begin position="1"/>
        <end position="22"/>
    </location>
</feature>
<feature type="chain" id="PRO_0000007223" description="Dickkopf-related protein 3">
    <location>
        <begin position="23"/>
        <end position="349"/>
    </location>
</feature>
<feature type="region of interest" description="DKK-type Cys-1">
    <location>
        <begin position="147"/>
        <end position="195"/>
    </location>
</feature>
<feature type="region of interest" description="DKK-type Cys-2">
    <location>
        <begin position="208"/>
        <end position="284"/>
    </location>
</feature>
<feature type="coiled-coil region" evidence="2">
    <location>
        <begin position="39"/>
        <end position="84"/>
    </location>
</feature>
<feature type="glycosylation site" description="N-linked (GlcNAc...) asparagine" evidence="2">
    <location>
        <position position="96"/>
    </location>
</feature>
<feature type="glycosylation site" description="N-linked (GlcNAc...) asparagine" evidence="2">
    <location>
        <position position="106"/>
    </location>
</feature>
<feature type="glycosylation site" description="N-linked (GlcNAc...) asparagine" evidence="2">
    <location>
        <position position="121"/>
    </location>
</feature>
<feature type="glycosylation site" description="N-linked (GlcNAc...) asparagine" evidence="2">
    <location>
        <position position="204"/>
    </location>
</feature>
<feature type="disulfide bond" evidence="1">
    <location>
        <begin position="208"/>
        <end position="220"/>
    </location>
</feature>
<feature type="disulfide bond" evidence="1">
    <location>
        <begin position="214"/>
        <end position="231"/>
    </location>
</feature>
<feature type="disulfide bond" evidence="1">
    <location>
        <begin position="219"/>
        <end position="265"/>
    </location>
</feature>
<feature type="disulfide bond" evidence="1">
    <location>
        <begin position="241"/>
        <end position="273"/>
    </location>
</feature>
<accession>Q9QUN9</accession>
<evidence type="ECO:0000250" key="1"/>
<evidence type="ECO:0000255" key="2"/>
<evidence type="ECO:0000269" key="3">
    <source>
    </source>
</evidence>
<evidence type="ECO:0000305" key="4"/>
<sequence>MQRLGGILLCTLLAAAVPTAPAPSPTVTWTPAEPGPALNYPQEEATLNEMFREVEELMEDTQHKLRSAVEEMEAEEAAAKTSSEVNLASLPPNYHNETSTETRVGNNTVHVHQEVHKITNNQSGQVVFSETVITSVGDEEGKRSHECIIDEDCGPTRYCQFSSFKYTCQPCRDQQMLCTRDSECCGDQLCAWGHCTQKATKGGNGTICDNQRDCQPGLCCAFQRGLLFPVCTPLPVEGELCHDPTSQLLDLITWELEPEGALDRCPCASGLLCQPHSHSLVYMCKPAFVGSHDHSEESQLPREAPDEYEDVGFIGEVRQELEDLERSLAQEMAFEGPAPVESLGGEEEI</sequence>
<proteinExistence type="evidence at transcript level"/>
<protein>
    <recommendedName>
        <fullName>Dickkopf-related protein 3</fullName>
        <shortName>Dickkopf-3</shortName>
        <shortName>Dkk-3</shortName>
        <shortName>mDkk-3</shortName>
    </recommendedName>
</protein>